<organism>
    <name type="scientific">Alcanivorax borkumensis (strain ATCC 700651 / DSM 11573 / NCIMB 13689 / SK2)</name>
    <dbReference type="NCBI Taxonomy" id="393595"/>
    <lineage>
        <taxon>Bacteria</taxon>
        <taxon>Pseudomonadati</taxon>
        <taxon>Pseudomonadota</taxon>
        <taxon>Gammaproteobacteria</taxon>
        <taxon>Oceanospirillales</taxon>
        <taxon>Alcanivoracaceae</taxon>
        <taxon>Alcanivorax</taxon>
    </lineage>
</organism>
<evidence type="ECO:0000255" key="1">
    <source>
        <dbReference type="HAMAP-Rule" id="MF_00237"/>
    </source>
</evidence>
<evidence type="ECO:0000256" key="2">
    <source>
        <dbReference type="SAM" id="MobiDB-lite"/>
    </source>
</evidence>
<dbReference type="EMBL" id="AM286690">
    <property type="protein sequence ID" value="CAL17699.1"/>
    <property type="molecule type" value="Genomic_DNA"/>
</dbReference>
<dbReference type="RefSeq" id="WP_011589526.1">
    <property type="nucleotide sequence ID" value="NC_008260.1"/>
</dbReference>
<dbReference type="SMR" id="Q0VM99"/>
<dbReference type="STRING" id="393595.ABO_2251"/>
<dbReference type="KEGG" id="abo:ABO_2251"/>
<dbReference type="eggNOG" id="COG1826">
    <property type="taxonomic scope" value="Bacteria"/>
</dbReference>
<dbReference type="HOGENOM" id="CLU_086034_1_1_6"/>
<dbReference type="OrthoDB" id="9816005at2"/>
<dbReference type="Proteomes" id="UP000008871">
    <property type="component" value="Chromosome"/>
</dbReference>
<dbReference type="GO" id="GO:0033281">
    <property type="term" value="C:TAT protein transport complex"/>
    <property type="evidence" value="ECO:0007669"/>
    <property type="project" value="UniProtKB-UniRule"/>
</dbReference>
<dbReference type="GO" id="GO:0008320">
    <property type="term" value="F:protein transmembrane transporter activity"/>
    <property type="evidence" value="ECO:0007669"/>
    <property type="project" value="UniProtKB-UniRule"/>
</dbReference>
<dbReference type="GO" id="GO:0043953">
    <property type="term" value="P:protein transport by the Tat complex"/>
    <property type="evidence" value="ECO:0007669"/>
    <property type="project" value="UniProtKB-UniRule"/>
</dbReference>
<dbReference type="Gene3D" id="1.20.5.3310">
    <property type="match status" value="1"/>
</dbReference>
<dbReference type="HAMAP" id="MF_00237">
    <property type="entry name" value="TatB"/>
    <property type="match status" value="1"/>
</dbReference>
<dbReference type="InterPro" id="IPR003369">
    <property type="entry name" value="TatA/B/E"/>
</dbReference>
<dbReference type="InterPro" id="IPR018448">
    <property type="entry name" value="TatB"/>
</dbReference>
<dbReference type="NCBIfam" id="TIGR01410">
    <property type="entry name" value="tatB"/>
    <property type="match status" value="1"/>
</dbReference>
<dbReference type="PANTHER" id="PTHR33162">
    <property type="entry name" value="SEC-INDEPENDENT PROTEIN TRANSLOCASE PROTEIN TATA, CHLOROPLASTIC"/>
    <property type="match status" value="1"/>
</dbReference>
<dbReference type="PANTHER" id="PTHR33162:SF1">
    <property type="entry name" value="SEC-INDEPENDENT PROTEIN TRANSLOCASE PROTEIN TATA, CHLOROPLASTIC"/>
    <property type="match status" value="1"/>
</dbReference>
<dbReference type="Pfam" id="PF02416">
    <property type="entry name" value="TatA_B_E"/>
    <property type="match status" value="1"/>
</dbReference>
<dbReference type="PRINTS" id="PR01506">
    <property type="entry name" value="TATBPROTEIN"/>
</dbReference>
<name>TATB_ALCBS</name>
<protein>
    <recommendedName>
        <fullName evidence="1">Sec-independent protein translocase protein TatB</fullName>
    </recommendedName>
</protein>
<feature type="chain" id="PRO_0000301139" description="Sec-independent protein translocase protein TatB">
    <location>
        <begin position="1"/>
        <end position="130"/>
    </location>
</feature>
<feature type="transmembrane region" description="Helical" evidence="1">
    <location>
        <begin position="1"/>
        <end position="21"/>
    </location>
</feature>
<feature type="region of interest" description="Disordered" evidence="2">
    <location>
        <begin position="57"/>
        <end position="130"/>
    </location>
</feature>
<feature type="compositionally biased region" description="Basic and acidic residues" evidence="2">
    <location>
        <begin position="57"/>
        <end position="67"/>
    </location>
</feature>
<feature type="compositionally biased region" description="Basic and acidic residues" evidence="2">
    <location>
        <begin position="111"/>
        <end position="130"/>
    </location>
</feature>
<comment type="function">
    <text evidence="1">Part of the twin-arginine translocation (Tat) system that transports large folded proteins containing a characteristic twin-arginine motif in their signal peptide across membranes. Together with TatC, TatB is part of a receptor directly interacting with Tat signal peptides. TatB may form an oligomeric binding site that transiently accommodates folded Tat precursor proteins before their translocation.</text>
</comment>
<comment type="subunit">
    <text evidence="1">The Tat system comprises two distinct complexes: a TatABC complex, containing multiple copies of TatA, TatB and TatC subunits, and a separate TatA complex, containing only TatA subunits. Substrates initially bind to the TatABC complex, which probably triggers association of the separate TatA complex to form the active translocon.</text>
</comment>
<comment type="subcellular location">
    <subcellularLocation>
        <location evidence="1">Cell inner membrane</location>
        <topology evidence="1">Single-pass membrane protein</topology>
    </subcellularLocation>
</comment>
<comment type="similarity">
    <text evidence="1">Belongs to the TatB family.</text>
</comment>
<accession>Q0VM99</accession>
<sequence length="130" mass="14882">MFDIGFTELTLIFIIGLVVLGPERLPTVARTLGHWIGRARSTLNHLKSELERETITQDMQERMEKQMRQMGLDEDSIREAKDSLLSPEQIARSRTPRDKPLSAALNNDESPSDKDSADKNNHDQDSRRHD</sequence>
<reference key="1">
    <citation type="journal article" date="2006" name="Nat. Biotechnol.">
        <title>Genome sequence of the ubiquitous hydrocarbon-degrading marine bacterium Alcanivorax borkumensis.</title>
        <authorList>
            <person name="Schneiker S."/>
            <person name="Martins dos Santos V.A.P."/>
            <person name="Bartels D."/>
            <person name="Bekel T."/>
            <person name="Brecht M."/>
            <person name="Buhrmester J."/>
            <person name="Chernikova T.N."/>
            <person name="Denaro R."/>
            <person name="Ferrer M."/>
            <person name="Gertler C."/>
            <person name="Goesmann A."/>
            <person name="Golyshina O.V."/>
            <person name="Kaminski F."/>
            <person name="Khachane A.N."/>
            <person name="Lang S."/>
            <person name="Linke B."/>
            <person name="McHardy A.C."/>
            <person name="Meyer F."/>
            <person name="Nechitaylo T."/>
            <person name="Puehler A."/>
            <person name="Regenhardt D."/>
            <person name="Rupp O."/>
            <person name="Sabirova J.S."/>
            <person name="Selbitschka W."/>
            <person name="Yakimov M.M."/>
            <person name="Timmis K.N."/>
            <person name="Vorhoelter F.-J."/>
            <person name="Weidner S."/>
            <person name="Kaiser O."/>
            <person name="Golyshin P.N."/>
        </authorList>
    </citation>
    <scope>NUCLEOTIDE SEQUENCE [LARGE SCALE GENOMIC DNA]</scope>
    <source>
        <strain>ATCC 700651 / DSM 11573 / NCIMB 13689 / SK2</strain>
    </source>
</reference>
<keyword id="KW-0997">Cell inner membrane</keyword>
<keyword id="KW-1003">Cell membrane</keyword>
<keyword id="KW-0472">Membrane</keyword>
<keyword id="KW-0653">Protein transport</keyword>
<keyword id="KW-1185">Reference proteome</keyword>
<keyword id="KW-0811">Translocation</keyword>
<keyword id="KW-0812">Transmembrane</keyword>
<keyword id="KW-1133">Transmembrane helix</keyword>
<keyword id="KW-0813">Transport</keyword>
<gene>
    <name evidence="1" type="primary">tatB</name>
    <name type="ordered locus">ABO_2251</name>
</gene>
<proteinExistence type="inferred from homology"/>